<accession>A1KAG5</accession>
<protein>
    <recommendedName>
        <fullName>Acylphosphatase</fullName>
        <ecNumber>3.6.1.7</ecNumber>
    </recommendedName>
    <alternativeName>
        <fullName>Acylphosphate phosphohydrolase</fullName>
    </alternativeName>
</protein>
<dbReference type="EC" id="3.6.1.7"/>
<dbReference type="EMBL" id="AM406670">
    <property type="protein sequence ID" value="CAL95821.1"/>
    <property type="molecule type" value="Genomic_DNA"/>
</dbReference>
<dbReference type="RefSeq" id="WP_011766929.1">
    <property type="nucleotide sequence ID" value="NC_008702.1"/>
</dbReference>
<dbReference type="SMR" id="A1KAG5"/>
<dbReference type="STRING" id="62928.azo3205"/>
<dbReference type="KEGG" id="aoa:dqs_3342"/>
<dbReference type="KEGG" id="azo:azo3205"/>
<dbReference type="eggNOG" id="COG1254">
    <property type="taxonomic scope" value="Bacteria"/>
</dbReference>
<dbReference type="HOGENOM" id="CLU_141932_3_2_4"/>
<dbReference type="OrthoDB" id="5295388at2"/>
<dbReference type="Proteomes" id="UP000002588">
    <property type="component" value="Chromosome"/>
</dbReference>
<dbReference type="GO" id="GO:0003998">
    <property type="term" value="F:acylphosphatase activity"/>
    <property type="evidence" value="ECO:0007669"/>
    <property type="project" value="UniProtKB-EC"/>
</dbReference>
<dbReference type="Gene3D" id="3.30.70.100">
    <property type="match status" value="1"/>
</dbReference>
<dbReference type="InterPro" id="IPR020456">
    <property type="entry name" value="Acylphosphatase"/>
</dbReference>
<dbReference type="InterPro" id="IPR001792">
    <property type="entry name" value="Acylphosphatase-like_dom"/>
</dbReference>
<dbReference type="InterPro" id="IPR036046">
    <property type="entry name" value="Acylphosphatase-like_dom_sf"/>
</dbReference>
<dbReference type="InterPro" id="IPR017968">
    <property type="entry name" value="Acylphosphatase_CS"/>
</dbReference>
<dbReference type="PANTHER" id="PTHR47268">
    <property type="entry name" value="ACYLPHOSPHATASE"/>
    <property type="match status" value="1"/>
</dbReference>
<dbReference type="PANTHER" id="PTHR47268:SF4">
    <property type="entry name" value="ACYLPHOSPHATASE"/>
    <property type="match status" value="1"/>
</dbReference>
<dbReference type="Pfam" id="PF00708">
    <property type="entry name" value="Acylphosphatase"/>
    <property type="match status" value="1"/>
</dbReference>
<dbReference type="PRINTS" id="PR00112">
    <property type="entry name" value="ACYLPHPHTASE"/>
</dbReference>
<dbReference type="SUPFAM" id="SSF54975">
    <property type="entry name" value="Acylphosphatase/BLUF domain-like"/>
    <property type="match status" value="1"/>
</dbReference>
<dbReference type="PROSITE" id="PS00151">
    <property type="entry name" value="ACYLPHOSPHATASE_2"/>
    <property type="match status" value="1"/>
</dbReference>
<dbReference type="PROSITE" id="PS51160">
    <property type="entry name" value="ACYLPHOSPHATASE_3"/>
    <property type="match status" value="1"/>
</dbReference>
<comment type="catalytic activity">
    <reaction>
        <text>an acyl phosphate + H2O = a carboxylate + phosphate + H(+)</text>
        <dbReference type="Rhea" id="RHEA:14965"/>
        <dbReference type="ChEBI" id="CHEBI:15377"/>
        <dbReference type="ChEBI" id="CHEBI:15378"/>
        <dbReference type="ChEBI" id="CHEBI:29067"/>
        <dbReference type="ChEBI" id="CHEBI:43474"/>
        <dbReference type="ChEBI" id="CHEBI:59918"/>
        <dbReference type="EC" id="3.6.1.7"/>
    </reaction>
</comment>
<comment type="similarity">
    <text evidence="2">Belongs to the acylphosphatase family.</text>
</comment>
<gene>
    <name type="primary">acyP</name>
    <name type="ordered locus">azo3205</name>
</gene>
<keyword id="KW-0378">Hydrolase</keyword>
<keyword id="KW-1185">Reference proteome</keyword>
<organism>
    <name type="scientific">Azoarcus sp. (strain BH72)</name>
    <dbReference type="NCBI Taxonomy" id="418699"/>
    <lineage>
        <taxon>Bacteria</taxon>
        <taxon>Pseudomonadati</taxon>
        <taxon>Pseudomonadota</taxon>
        <taxon>Betaproteobacteria</taxon>
        <taxon>Rhodocyclales</taxon>
        <taxon>Zoogloeaceae</taxon>
        <taxon>Azoarcus</taxon>
    </lineage>
</organism>
<sequence length="98" mass="10300">MPDPDSTLAARLLRIRGRVQGVSYRASAQREAQRLGLSGWVRNRHDGSVEALVCGPADTVERFIAWAHVGPPAASVSAIEVGDAAPTDGAGFDCLPTC</sequence>
<proteinExistence type="inferred from homology"/>
<feature type="chain" id="PRO_0000326654" description="Acylphosphatase">
    <location>
        <begin position="1"/>
        <end position="98"/>
    </location>
</feature>
<feature type="domain" description="Acylphosphatase-like" evidence="1">
    <location>
        <begin position="10"/>
        <end position="96"/>
    </location>
</feature>
<feature type="active site" evidence="1">
    <location>
        <position position="25"/>
    </location>
</feature>
<feature type="active site" evidence="1">
    <location>
        <position position="43"/>
    </location>
</feature>
<evidence type="ECO:0000255" key="1">
    <source>
        <dbReference type="PROSITE-ProRule" id="PRU00520"/>
    </source>
</evidence>
<evidence type="ECO:0000305" key="2"/>
<name>ACYP_AZOSB</name>
<reference key="1">
    <citation type="journal article" date="2006" name="Nat. Biotechnol.">
        <title>Complete genome of the mutualistic, N2-fixing grass endophyte Azoarcus sp. strain BH72.</title>
        <authorList>
            <person name="Krause A."/>
            <person name="Ramakumar A."/>
            <person name="Bartels D."/>
            <person name="Battistoni F."/>
            <person name="Bekel T."/>
            <person name="Boch J."/>
            <person name="Boehm M."/>
            <person name="Friedrich F."/>
            <person name="Hurek T."/>
            <person name="Krause L."/>
            <person name="Linke B."/>
            <person name="McHardy A.C."/>
            <person name="Sarkar A."/>
            <person name="Schneiker S."/>
            <person name="Syed A.A."/>
            <person name="Thauer R."/>
            <person name="Vorhoelter F.-J."/>
            <person name="Weidner S."/>
            <person name="Puehler A."/>
            <person name="Reinhold-Hurek B."/>
            <person name="Kaiser O."/>
            <person name="Goesmann A."/>
        </authorList>
    </citation>
    <scope>NUCLEOTIDE SEQUENCE [LARGE SCALE GENOMIC DNA]</scope>
    <source>
        <strain>BH72</strain>
    </source>
</reference>